<evidence type="ECO:0000255" key="1"/>
<evidence type="ECO:0000256" key="2">
    <source>
        <dbReference type="SAM" id="MobiDB-lite"/>
    </source>
</evidence>
<evidence type="ECO:0000305" key="3"/>
<evidence type="ECO:0007744" key="4">
    <source>
    </source>
</evidence>
<feature type="chain" id="PRO_0000304788" description="Transmembrane protein C1orf162 homolog">
    <location>
        <begin position="1"/>
        <end position="132"/>
    </location>
</feature>
<feature type="transmembrane region" description="Helical" evidence="1">
    <location>
        <begin position="36"/>
        <end position="56"/>
    </location>
</feature>
<feature type="region of interest" description="Disordered" evidence="2">
    <location>
        <begin position="95"/>
        <end position="132"/>
    </location>
</feature>
<feature type="compositionally biased region" description="Polar residues" evidence="2">
    <location>
        <begin position="104"/>
        <end position="124"/>
    </location>
</feature>
<feature type="modified residue" description="Phosphoserine" evidence="4">
    <location>
        <position position="111"/>
    </location>
</feature>
<dbReference type="EMBL" id="AK152510">
    <property type="protein sequence ID" value="BAE31275.1"/>
    <property type="molecule type" value="mRNA"/>
</dbReference>
<dbReference type="EMBL" id="BC147821">
    <property type="protein sequence ID" value="AAI47822.1"/>
    <property type="molecule type" value="mRNA"/>
</dbReference>
<dbReference type="EMBL" id="BC147828">
    <property type="protein sequence ID" value="AAI47829.1"/>
    <property type="molecule type" value="mRNA"/>
</dbReference>
<dbReference type="CCDS" id="CCDS17713.1"/>
<dbReference type="RefSeq" id="NP_001028952.1">
    <property type="nucleotide sequence ID" value="NM_001033780.3"/>
</dbReference>
<dbReference type="RefSeq" id="XP_006501710.1">
    <property type="nucleotide sequence ID" value="XM_006501647.5"/>
</dbReference>
<dbReference type="SMR" id="Q3U7U4"/>
<dbReference type="STRING" id="10090.ENSMUSP00000096354"/>
<dbReference type="iPTMnet" id="Q3U7U4"/>
<dbReference type="PhosphoSitePlus" id="Q3U7U4"/>
<dbReference type="PaxDb" id="10090-ENSMUSP00000096354"/>
<dbReference type="Antibodypedia" id="33811">
    <property type="antibodies" value="41 antibodies from 9 providers"/>
</dbReference>
<dbReference type="Ensembl" id="ENSMUST00000098758.5">
    <property type="protein sequence ID" value="ENSMUSP00000096354.3"/>
    <property type="gene ID" value="ENSMUSG00000074342.5"/>
</dbReference>
<dbReference type="GeneID" id="433638"/>
<dbReference type="KEGG" id="mmu:433638"/>
<dbReference type="UCSC" id="uc008qvk.1">
    <property type="organism name" value="mouse"/>
</dbReference>
<dbReference type="AGR" id="MGI:3588284"/>
<dbReference type="MGI" id="MGI:3588284">
    <property type="gene designation" value="I830077J02Rik"/>
</dbReference>
<dbReference type="VEuPathDB" id="HostDB:ENSMUSG00000074342"/>
<dbReference type="eggNOG" id="ENOG502TE6S">
    <property type="taxonomic scope" value="Eukaryota"/>
</dbReference>
<dbReference type="GeneTree" id="ENSGT00390000015005"/>
<dbReference type="HOGENOM" id="CLU_136856_0_0_1"/>
<dbReference type="InParanoid" id="Q3U7U4"/>
<dbReference type="OMA" id="MAGHSKP"/>
<dbReference type="OrthoDB" id="9451692at2759"/>
<dbReference type="PhylomeDB" id="Q3U7U4"/>
<dbReference type="TreeFam" id="TF338377"/>
<dbReference type="BioGRID-ORCS" id="433638">
    <property type="hits" value="3 hits in 78 CRISPR screens"/>
</dbReference>
<dbReference type="PRO" id="PR:Q3U7U4"/>
<dbReference type="Proteomes" id="UP000000589">
    <property type="component" value="Chromosome 3"/>
</dbReference>
<dbReference type="RNAct" id="Q3U7U4">
    <property type="molecule type" value="protein"/>
</dbReference>
<dbReference type="Bgee" id="ENSMUSG00000074342">
    <property type="expression patterns" value="Expressed in granulocyte and 97 other cell types or tissues"/>
</dbReference>
<dbReference type="ExpressionAtlas" id="Q3U7U4">
    <property type="expression patterns" value="baseline and differential"/>
</dbReference>
<dbReference type="GO" id="GO:0016020">
    <property type="term" value="C:membrane"/>
    <property type="evidence" value="ECO:0007669"/>
    <property type="project" value="UniProtKB-SubCell"/>
</dbReference>
<dbReference type="InterPro" id="IPR037763">
    <property type="entry name" value="C1orf162"/>
</dbReference>
<dbReference type="PANTHER" id="PTHR37997">
    <property type="entry name" value="TRANSMEMBRANE PROTEIN C1ORF162"/>
    <property type="match status" value="1"/>
</dbReference>
<dbReference type="PANTHER" id="PTHR37997:SF1">
    <property type="entry name" value="TRANSMEMBRANE PROTEIN C1ORF162"/>
    <property type="match status" value="1"/>
</dbReference>
<keyword id="KW-0472">Membrane</keyword>
<keyword id="KW-0597">Phosphoprotein</keyword>
<keyword id="KW-1185">Reference proteome</keyword>
<keyword id="KW-0812">Transmembrane</keyword>
<keyword id="KW-1133">Transmembrane helix</keyword>
<accession>Q3U7U4</accession>
<accession>B2RWJ4</accession>
<organism>
    <name type="scientific">Mus musculus</name>
    <name type="common">Mouse</name>
    <dbReference type="NCBI Taxonomy" id="10090"/>
    <lineage>
        <taxon>Eukaryota</taxon>
        <taxon>Metazoa</taxon>
        <taxon>Chordata</taxon>
        <taxon>Craniata</taxon>
        <taxon>Vertebrata</taxon>
        <taxon>Euteleostomi</taxon>
        <taxon>Mammalia</taxon>
        <taxon>Eutheria</taxon>
        <taxon>Euarchontoglires</taxon>
        <taxon>Glires</taxon>
        <taxon>Rodentia</taxon>
        <taxon>Myomorpha</taxon>
        <taxon>Muroidea</taxon>
        <taxon>Muridae</taxon>
        <taxon>Murinae</taxon>
        <taxon>Mus</taxon>
        <taxon>Mus</taxon>
    </lineage>
</organism>
<reference key="1">
    <citation type="journal article" date="2005" name="Science">
        <title>The transcriptional landscape of the mammalian genome.</title>
        <authorList>
            <person name="Carninci P."/>
            <person name="Kasukawa T."/>
            <person name="Katayama S."/>
            <person name="Gough J."/>
            <person name="Frith M.C."/>
            <person name="Maeda N."/>
            <person name="Oyama R."/>
            <person name="Ravasi T."/>
            <person name="Lenhard B."/>
            <person name="Wells C."/>
            <person name="Kodzius R."/>
            <person name="Shimokawa K."/>
            <person name="Bajic V.B."/>
            <person name="Brenner S.E."/>
            <person name="Batalov S."/>
            <person name="Forrest A.R."/>
            <person name="Zavolan M."/>
            <person name="Davis M.J."/>
            <person name="Wilming L.G."/>
            <person name="Aidinis V."/>
            <person name="Allen J.E."/>
            <person name="Ambesi-Impiombato A."/>
            <person name="Apweiler R."/>
            <person name="Aturaliya R.N."/>
            <person name="Bailey T.L."/>
            <person name="Bansal M."/>
            <person name="Baxter L."/>
            <person name="Beisel K.W."/>
            <person name="Bersano T."/>
            <person name="Bono H."/>
            <person name="Chalk A.M."/>
            <person name="Chiu K.P."/>
            <person name="Choudhary V."/>
            <person name="Christoffels A."/>
            <person name="Clutterbuck D.R."/>
            <person name="Crowe M.L."/>
            <person name="Dalla E."/>
            <person name="Dalrymple B.P."/>
            <person name="de Bono B."/>
            <person name="Della Gatta G."/>
            <person name="di Bernardo D."/>
            <person name="Down T."/>
            <person name="Engstrom P."/>
            <person name="Fagiolini M."/>
            <person name="Faulkner G."/>
            <person name="Fletcher C.F."/>
            <person name="Fukushima T."/>
            <person name="Furuno M."/>
            <person name="Futaki S."/>
            <person name="Gariboldi M."/>
            <person name="Georgii-Hemming P."/>
            <person name="Gingeras T.R."/>
            <person name="Gojobori T."/>
            <person name="Green R.E."/>
            <person name="Gustincich S."/>
            <person name="Harbers M."/>
            <person name="Hayashi Y."/>
            <person name="Hensch T.K."/>
            <person name="Hirokawa N."/>
            <person name="Hill D."/>
            <person name="Huminiecki L."/>
            <person name="Iacono M."/>
            <person name="Ikeo K."/>
            <person name="Iwama A."/>
            <person name="Ishikawa T."/>
            <person name="Jakt M."/>
            <person name="Kanapin A."/>
            <person name="Katoh M."/>
            <person name="Kawasawa Y."/>
            <person name="Kelso J."/>
            <person name="Kitamura H."/>
            <person name="Kitano H."/>
            <person name="Kollias G."/>
            <person name="Krishnan S.P."/>
            <person name="Kruger A."/>
            <person name="Kummerfeld S.K."/>
            <person name="Kurochkin I.V."/>
            <person name="Lareau L.F."/>
            <person name="Lazarevic D."/>
            <person name="Lipovich L."/>
            <person name="Liu J."/>
            <person name="Liuni S."/>
            <person name="McWilliam S."/>
            <person name="Madan Babu M."/>
            <person name="Madera M."/>
            <person name="Marchionni L."/>
            <person name="Matsuda H."/>
            <person name="Matsuzawa S."/>
            <person name="Miki H."/>
            <person name="Mignone F."/>
            <person name="Miyake S."/>
            <person name="Morris K."/>
            <person name="Mottagui-Tabar S."/>
            <person name="Mulder N."/>
            <person name="Nakano N."/>
            <person name="Nakauchi H."/>
            <person name="Ng P."/>
            <person name="Nilsson R."/>
            <person name="Nishiguchi S."/>
            <person name="Nishikawa S."/>
            <person name="Nori F."/>
            <person name="Ohara O."/>
            <person name="Okazaki Y."/>
            <person name="Orlando V."/>
            <person name="Pang K.C."/>
            <person name="Pavan W.J."/>
            <person name="Pavesi G."/>
            <person name="Pesole G."/>
            <person name="Petrovsky N."/>
            <person name="Piazza S."/>
            <person name="Reed J."/>
            <person name="Reid J.F."/>
            <person name="Ring B.Z."/>
            <person name="Ringwald M."/>
            <person name="Rost B."/>
            <person name="Ruan Y."/>
            <person name="Salzberg S.L."/>
            <person name="Sandelin A."/>
            <person name="Schneider C."/>
            <person name="Schoenbach C."/>
            <person name="Sekiguchi K."/>
            <person name="Semple C.A."/>
            <person name="Seno S."/>
            <person name="Sessa L."/>
            <person name="Sheng Y."/>
            <person name="Shibata Y."/>
            <person name="Shimada H."/>
            <person name="Shimada K."/>
            <person name="Silva D."/>
            <person name="Sinclair B."/>
            <person name="Sperling S."/>
            <person name="Stupka E."/>
            <person name="Sugiura K."/>
            <person name="Sultana R."/>
            <person name="Takenaka Y."/>
            <person name="Taki K."/>
            <person name="Tammoja K."/>
            <person name="Tan S.L."/>
            <person name="Tang S."/>
            <person name="Taylor M.S."/>
            <person name="Tegner J."/>
            <person name="Teichmann S.A."/>
            <person name="Ueda H.R."/>
            <person name="van Nimwegen E."/>
            <person name="Verardo R."/>
            <person name="Wei C.L."/>
            <person name="Yagi K."/>
            <person name="Yamanishi H."/>
            <person name="Zabarovsky E."/>
            <person name="Zhu S."/>
            <person name="Zimmer A."/>
            <person name="Hide W."/>
            <person name="Bult C."/>
            <person name="Grimmond S.M."/>
            <person name="Teasdale R.D."/>
            <person name="Liu E.T."/>
            <person name="Brusic V."/>
            <person name="Quackenbush J."/>
            <person name="Wahlestedt C."/>
            <person name="Mattick J.S."/>
            <person name="Hume D.A."/>
            <person name="Kai C."/>
            <person name="Sasaki D."/>
            <person name="Tomaru Y."/>
            <person name="Fukuda S."/>
            <person name="Kanamori-Katayama M."/>
            <person name="Suzuki M."/>
            <person name="Aoki J."/>
            <person name="Arakawa T."/>
            <person name="Iida J."/>
            <person name="Imamura K."/>
            <person name="Itoh M."/>
            <person name="Kato T."/>
            <person name="Kawaji H."/>
            <person name="Kawagashira N."/>
            <person name="Kawashima T."/>
            <person name="Kojima M."/>
            <person name="Kondo S."/>
            <person name="Konno H."/>
            <person name="Nakano K."/>
            <person name="Ninomiya N."/>
            <person name="Nishio T."/>
            <person name="Okada M."/>
            <person name="Plessy C."/>
            <person name="Shibata K."/>
            <person name="Shiraki T."/>
            <person name="Suzuki S."/>
            <person name="Tagami M."/>
            <person name="Waki K."/>
            <person name="Watahiki A."/>
            <person name="Okamura-Oho Y."/>
            <person name="Suzuki H."/>
            <person name="Kawai J."/>
            <person name="Hayashizaki Y."/>
        </authorList>
    </citation>
    <scope>NUCLEOTIDE SEQUENCE [LARGE SCALE MRNA]</scope>
    <source>
        <strain>C57BL/6J</strain>
        <tissue>Bone marrow</tissue>
    </source>
</reference>
<reference key="2">
    <citation type="journal article" date="2004" name="Genome Res.">
        <title>The status, quality, and expansion of the NIH full-length cDNA project: the Mammalian Gene Collection (MGC).</title>
        <authorList>
            <consortium name="The MGC Project Team"/>
        </authorList>
    </citation>
    <scope>NUCLEOTIDE SEQUENCE [LARGE SCALE MRNA]</scope>
    <source>
        <tissue>Brain</tissue>
    </source>
</reference>
<reference key="3">
    <citation type="journal article" date="2009" name="Immunity">
        <title>The phagosomal proteome in interferon-gamma-activated macrophages.</title>
        <authorList>
            <person name="Trost M."/>
            <person name="English L."/>
            <person name="Lemieux S."/>
            <person name="Courcelles M."/>
            <person name="Desjardins M."/>
            <person name="Thibault P."/>
        </authorList>
    </citation>
    <scope>PHOSPHORYLATION [LARGE SCALE ANALYSIS] AT SER-111</scope>
    <scope>IDENTIFICATION BY MASS SPECTROMETRY [LARGE SCALE ANALYSIS]</scope>
</reference>
<reference key="4">
    <citation type="journal article" date="2010" name="Cell">
        <title>A tissue-specific atlas of mouse protein phosphorylation and expression.</title>
        <authorList>
            <person name="Huttlin E.L."/>
            <person name="Jedrychowski M.P."/>
            <person name="Elias J.E."/>
            <person name="Goswami T."/>
            <person name="Rad R."/>
            <person name="Beausoleil S.A."/>
            <person name="Villen J."/>
            <person name="Haas W."/>
            <person name="Sowa M.E."/>
            <person name="Gygi S.P."/>
        </authorList>
    </citation>
    <scope>IDENTIFICATION BY MASS SPECTROMETRY [LARGE SCALE ANALYSIS]</scope>
    <source>
        <tissue>Spleen</tissue>
    </source>
</reference>
<comment type="subcellular location">
    <subcellularLocation>
        <location evidence="3">Membrane</location>
        <topology evidence="3">Single-pass membrane protein</topology>
    </subcellularLocation>
</comment>
<sequence length="132" mass="14354">MGSTSSTPKSTICTFSTTAPVTSSTPYFFNPKKEHIILAFFAGVLLTLLIVALIFLIVKSCRKCHSSAQTQDPPSEPPTKLSSLSKESLTYASMTFKPPEENSNDLTRNHSSGLEPTIYSQIKVTDSDLPLP</sequence>
<protein>
    <recommendedName>
        <fullName>Transmembrane protein C1orf162 homolog</fullName>
    </recommendedName>
</protein>
<proteinExistence type="evidence at protein level"/>
<name>CA162_MOUSE</name>